<protein>
    <recommendedName>
        <fullName evidence="1">Nascent polypeptide-associated complex protein</fullName>
    </recommendedName>
</protein>
<dbReference type="EMBL" id="AJ248285">
    <property type="protein sequence ID" value="CAB49559.1"/>
    <property type="molecule type" value="Genomic_DNA"/>
</dbReference>
<dbReference type="EMBL" id="HE613800">
    <property type="protein sequence ID" value="CCE70031.1"/>
    <property type="molecule type" value="Genomic_DNA"/>
</dbReference>
<dbReference type="PIR" id="F75105">
    <property type="entry name" value="F75105"/>
</dbReference>
<dbReference type="RefSeq" id="WP_010867761.1">
    <property type="nucleotide sequence ID" value="NC_000868.1"/>
</dbReference>
<dbReference type="SMR" id="Q9V0Z2"/>
<dbReference type="STRING" id="272844.PAB0439"/>
<dbReference type="KEGG" id="pab:PAB0439"/>
<dbReference type="PATRIC" id="fig|272844.11.peg.677"/>
<dbReference type="eggNOG" id="arCOG04061">
    <property type="taxonomic scope" value="Archaea"/>
</dbReference>
<dbReference type="HOGENOM" id="CLU_146475_0_0_2"/>
<dbReference type="OrthoDB" id="53273at2157"/>
<dbReference type="PhylomeDB" id="Q9V0Z2"/>
<dbReference type="Proteomes" id="UP000000810">
    <property type="component" value="Chromosome"/>
</dbReference>
<dbReference type="Proteomes" id="UP000009139">
    <property type="component" value="Chromosome"/>
</dbReference>
<dbReference type="GO" id="GO:0003723">
    <property type="term" value="F:RNA binding"/>
    <property type="evidence" value="ECO:0007669"/>
    <property type="project" value="UniProtKB-UniRule"/>
</dbReference>
<dbReference type="GO" id="GO:0015031">
    <property type="term" value="P:protein transport"/>
    <property type="evidence" value="ECO:0007669"/>
    <property type="project" value="UniProtKB-UniRule"/>
</dbReference>
<dbReference type="CDD" id="cd14359">
    <property type="entry name" value="UBA_AeNAC"/>
    <property type="match status" value="1"/>
</dbReference>
<dbReference type="Gene3D" id="1.10.8.10">
    <property type="entry name" value="DNA helicase RuvA subunit, C-terminal domain"/>
    <property type="match status" value="1"/>
</dbReference>
<dbReference type="Gene3D" id="2.20.70.30">
    <property type="entry name" value="Nascent polypeptide-associated complex domain"/>
    <property type="match status" value="1"/>
</dbReference>
<dbReference type="HAMAP" id="MF_00814">
    <property type="entry name" value="NAC_arch"/>
    <property type="match status" value="1"/>
</dbReference>
<dbReference type="InterPro" id="IPR044034">
    <property type="entry name" value="NAC-like_UBA"/>
</dbReference>
<dbReference type="InterPro" id="IPR038187">
    <property type="entry name" value="NAC_A/B_dom_sf"/>
</dbReference>
<dbReference type="InterPro" id="IPR005231">
    <property type="entry name" value="NAC_arc"/>
</dbReference>
<dbReference type="InterPro" id="IPR002715">
    <property type="entry name" value="Nas_poly-pep-assoc_cplx_dom"/>
</dbReference>
<dbReference type="InterPro" id="IPR009060">
    <property type="entry name" value="UBA-like_sf"/>
</dbReference>
<dbReference type="NCBIfam" id="TIGR00264">
    <property type="entry name" value="archaeal-type nascent polypeptide-associated complex protein"/>
    <property type="match status" value="1"/>
</dbReference>
<dbReference type="Pfam" id="PF01849">
    <property type="entry name" value="NAC"/>
    <property type="match status" value="1"/>
</dbReference>
<dbReference type="Pfam" id="PF19026">
    <property type="entry name" value="UBA_HYPK"/>
    <property type="match status" value="1"/>
</dbReference>
<dbReference type="SMART" id="SM01407">
    <property type="entry name" value="NAC"/>
    <property type="match status" value="1"/>
</dbReference>
<dbReference type="SUPFAM" id="SSF46934">
    <property type="entry name" value="UBA-like"/>
    <property type="match status" value="1"/>
</dbReference>
<dbReference type="PROSITE" id="PS51151">
    <property type="entry name" value="NAC_AB"/>
    <property type="match status" value="1"/>
</dbReference>
<gene>
    <name evidence="1" type="primary">nac</name>
    <name type="ordered locus">PYRAB06460</name>
    <name type="ORF">PAB0439</name>
</gene>
<evidence type="ECO:0000255" key="1">
    <source>
        <dbReference type="HAMAP-Rule" id="MF_00814"/>
    </source>
</evidence>
<sequence length="109" mass="12287">MMPMNPKQLKKLMKQLDMKQLDGVKEVIIKLENKEIVIKEPVVTVIRAMGEKMYQIAGGTEEERVVLKISEEDIKLVMEQAGVDYETAKKALEEAGGDLAEAILRLTDQ</sequence>
<keyword id="KW-0653">Protein transport</keyword>
<keyword id="KW-0694">RNA-binding</keyword>
<keyword id="KW-0813">Transport</keyword>
<feature type="chain" id="PRO_0000135607" description="Nascent polypeptide-associated complex protein">
    <location>
        <begin position="1"/>
        <end position="109"/>
    </location>
</feature>
<feature type="domain" description="NAC-A/B" evidence="1">
    <location>
        <begin position="3"/>
        <end position="69"/>
    </location>
</feature>
<accession>Q9V0Z2</accession>
<accession>G8ZJA4</accession>
<name>NAC_PYRAB</name>
<comment type="function">
    <text evidence="1">Contacts the emerging nascent chain on the ribosome.</text>
</comment>
<comment type="subunit">
    <text evidence="1">Homodimer. Interacts with the ribosome. Binds ribosomal RNA.</text>
</comment>
<comment type="similarity">
    <text evidence="1">Belongs to the NAC-alpha family.</text>
</comment>
<organism>
    <name type="scientific">Pyrococcus abyssi (strain GE5 / Orsay)</name>
    <dbReference type="NCBI Taxonomy" id="272844"/>
    <lineage>
        <taxon>Archaea</taxon>
        <taxon>Methanobacteriati</taxon>
        <taxon>Methanobacteriota</taxon>
        <taxon>Thermococci</taxon>
        <taxon>Thermococcales</taxon>
        <taxon>Thermococcaceae</taxon>
        <taxon>Pyrococcus</taxon>
    </lineage>
</organism>
<proteinExistence type="inferred from homology"/>
<reference key="1">
    <citation type="journal article" date="2003" name="Mol. Microbiol.">
        <title>An integrated analysis of the genome of the hyperthermophilic archaeon Pyrococcus abyssi.</title>
        <authorList>
            <person name="Cohen G.N."/>
            <person name="Barbe V."/>
            <person name="Flament D."/>
            <person name="Galperin M."/>
            <person name="Heilig R."/>
            <person name="Lecompte O."/>
            <person name="Poch O."/>
            <person name="Prieur D."/>
            <person name="Querellou J."/>
            <person name="Ripp R."/>
            <person name="Thierry J.-C."/>
            <person name="Van der Oost J."/>
            <person name="Weissenbach J."/>
            <person name="Zivanovic Y."/>
            <person name="Forterre P."/>
        </authorList>
    </citation>
    <scope>NUCLEOTIDE SEQUENCE [LARGE SCALE GENOMIC DNA]</scope>
    <source>
        <strain>GE5 / Orsay</strain>
    </source>
</reference>
<reference key="2">
    <citation type="journal article" date="2012" name="Curr. Microbiol.">
        <title>Re-annotation of two hyperthermophilic archaea Pyrococcus abyssi GE5 and Pyrococcus furiosus DSM 3638.</title>
        <authorList>
            <person name="Gao J."/>
            <person name="Wang J."/>
        </authorList>
    </citation>
    <scope>GENOME REANNOTATION</scope>
    <source>
        <strain>GE5 / Orsay</strain>
    </source>
</reference>